<proteinExistence type="evidence at transcript level"/>
<organism>
    <name type="scientific">Xenopus laevis</name>
    <name type="common">African clawed frog</name>
    <dbReference type="NCBI Taxonomy" id="8355"/>
    <lineage>
        <taxon>Eukaryota</taxon>
        <taxon>Metazoa</taxon>
        <taxon>Chordata</taxon>
        <taxon>Craniata</taxon>
        <taxon>Vertebrata</taxon>
        <taxon>Euteleostomi</taxon>
        <taxon>Amphibia</taxon>
        <taxon>Batrachia</taxon>
        <taxon>Anura</taxon>
        <taxon>Pipoidea</taxon>
        <taxon>Pipidae</taxon>
        <taxon>Xenopodinae</taxon>
        <taxon>Xenopus</taxon>
        <taxon>Xenopus</taxon>
    </lineage>
</organism>
<gene>
    <name type="primary">ncl</name>
</gene>
<accession>P20397</accession>
<sequence>MVKLAKGAKTQAKPKKAAPPPPKDMEDSEEEEDMEEDDSSDEEVEVPVKKTPAKKTATPAKATPGKAATPGKKGATPAKNGKQAKKQESEEEEDDSDEEAEDQKPIKNKPVAKKAVAKKEESEEDDDDEDESEEEKAVAKKPTPAKKPAGKKQESEEEDDEESEDEPMEVAPALKGKKTAQAAEEDDEEEDDDDEEDDDDEEEQQGSAKRKKEMPKTIPEAKKTKTDTASEGLSIFIGNLNSTKEFDELKDALREFFSKKNLTIQDIRIGNSKKFGYVDFSSEEEVEKALKLTGKKILGTEVKIEKAMAFDKNKTAENKKERDSRTLFVKNIPYSTTVEELQEIFENAKDIRIPTGKDGSNKGIAYVEFSNEDEANKALEEKQGAEIEGRSIFVDFTGEKSQNSGNKKGPEGDSKVLVVNNLSYSATEDSLREVFEKATSIRIPQNQGRAKGFAFIEFSSAEDAKDAMDSCNNTEIEGRSIRLEFSQGGGPQGGGRGGSAQSKTLFVRGLSEDTTEETLKEAFDGSVNARIVTDRDTGASKGFGFVDFSTAEDAKAAKEAMEDGEIDGNKVTLDFAKPKGDSQRGGRGGFGRGGGFRGGRGGRGGGGGRGFGGRGGGRGRGGFGGRGGGGFRGGQGGGFRGGQGKKMRFDD</sequence>
<feature type="initiator methionine" description="Removed" evidence="1">
    <location>
        <position position="1"/>
    </location>
</feature>
<feature type="chain" id="PRO_0000081696" description="Nucleolin">
    <location>
        <begin position="2"/>
        <end position="651"/>
    </location>
</feature>
<feature type="domain" description="RRM 1" evidence="2">
    <location>
        <begin position="233"/>
        <end position="309"/>
    </location>
</feature>
<feature type="domain" description="RRM 2" evidence="2">
    <location>
        <begin position="325"/>
        <end position="399"/>
    </location>
</feature>
<feature type="domain" description="RRM 3" evidence="2">
    <location>
        <begin position="415"/>
        <end position="488"/>
    </location>
</feature>
<feature type="domain" description="RRM 4" evidence="2">
    <location>
        <begin position="503"/>
        <end position="578"/>
    </location>
</feature>
<feature type="region of interest" description="Disordered" evidence="3">
    <location>
        <begin position="1"/>
        <end position="230"/>
    </location>
</feature>
<feature type="region of interest" description="Disordered" evidence="3">
    <location>
        <begin position="574"/>
        <end position="651"/>
    </location>
</feature>
<feature type="compositionally biased region" description="Low complexity" evidence="3">
    <location>
        <begin position="1"/>
        <end position="11"/>
    </location>
</feature>
<feature type="compositionally biased region" description="Acidic residues" evidence="3">
    <location>
        <begin position="26"/>
        <end position="45"/>
    </location>
</feature>
<feature type="compositionally biased region" description="Low complexity" evidence="3">
    <location>
        <begin position="54"/>
        <end position="79"/>
    </location>
</feature>
<feature type="compositionally biased region" description="Acidic residues" evidence="3">
    <location>
        <begin position="89"/>
        <end position="101"/>
    </location>
</feature>
<feature type="compositionally biased region" description="Basic residues" evidence="3">
    <location>
        <begin position="106"/>
        <end position="116"/>
    </location>
</feature>
<feature type="compositionally biased region" description="Acidic residues" evidence="3">
    <location>
        <begin position="122"/>
        <end position="134"/>
    </location>
</feature>
<feature type="compositionally biased region" description="Acidic residues" evidence="3">
    <location>
        <begin position="155"/>
        <end position="168"/>
    </location>
</feature>
<feature type="compositionally biased region" description="Acidic residues" evidence="3">
    <location>
        <begin position="183"/>
        <end position="204"/>
    </location>
</feature>
<feature type="compositionally biased region" description="Basic and acidic residues" evidence="3">
    <location>
        <begin position="219"/>
        <end position="228"/>
    </location>
</feature>
<feature type="compositionally biased region" description="Gly residues" evidence="3">
    <location>
        <begin position="585"/>
        <end position="644"/>
    </location>
</feature>
<feature type="modified residue" description="Phosphoserine" evidence="1">
    <location>
        <position position="155"/>
    </location>
</feature>
<feature type="sequence conflict" description="In Ref. 2." evidence="4" ref="2">
    <original>P</original>
    <variation>Q</variation>
    <location>
        <position position="215"/>
    </location>
</feature>
<feature type="sequence conflict" description="In Ref. 2." evidence="4" ref="2">
    <original>PE</original>
    <variation>LR</variation>
    <location>
        <begin position="219"/>
        <end position="220"/>
    </location>
</feature>
<feature type="sequence conflict" description="In Ref. 2." evidence="4" ref="2">
    <original>E</original>
    <variation>Q</variation>
    <location>
        <position position="411"/>
    </location>
</feature>
<feature type="sequence conflict" description="In Ref. 2." evidence="4" ref="2">
    <original>D</original>
    <variation>E</variation>
    <location>
        <position position="581"/>
    </location>
</feature>
<protein>
    <recommendedName>
        <fullName>Nucleolin</fullName>
    </recommendedName>
    <alternativeName>
        <fullName>Protein C23</fullName>
    </alternativeName>
</protein>
<dbReference type="EMBL" id="X63091">
    <property type="protein sequence ID" value="CAA44805.1"/>
    <property type="molecule type" value="mRNA"/>
</dbReference>
<dbReference type="PIR" id="S30250">
    <property type="entry name" value="S18874"/>
</dbReference>
<dbReference type="SMR" id="P20397"/>
<dbReference type="AGR" id="Xenbase:XB-GENE-17341192"/>
<dbReference type="Xenbase" id="XB-GENE-17341192">
    <property type="gene designation" value="ncl.L"/>
</dbReference>
<dbReference type="OrthoDB" id="167718at2759"/>
<dbReference type="CD-CODE" id="78E86D56">
    <property type="entry name" value="Mitochondrial cloud"/>
</dbReference>
<dbReference type="Proteomes" id="UP000186698">
    <property type="component" value="Unplaced"/>
</dbReference>
<dbReference type="GO" id="GO:0005730">
    <property type="term" value="C:nucleolus"/>
    <property type="evidence" value="ECO:0007669"/>
    <property type="project" value="UniProtKB-SubCell"/>
</dbReference>
<dbReference type="GO" id="GO:0005634">
    <property type="term" value="C:nucleus"/>
    <property type="evidence" value="ECO:0000318"/>
    <property type="project" value="GO_Central"/>
</dbReference>
<dbReference type="GO" id="GO:0003677">
    <property type="term" value="F:DNA binding"/>
    <property type="evidence" value="ECO:0007669"/>
    <property type="project" value="UniProtKB-KW"/>
</dbReference>
<dbReference type="GO" id="GO:0003729">
    <property type="term" value="F:mRNA binding"/>
    <property type="evidence" value="ECO:0000318"/>
    <property type="project" value="GO_Central"/>
</dbReference>
<dbReference type="GO" id="GO:0070935">
    <property type="term" value="P:3'-UTR-mediated mRNA stabilization"/>
    <property type="evidence" value="ECO:0000318"/>
    <property type="project" value="GO_Central"/>
</dbReference>
<dbReference type="CDD" id="cd12403">
    <property type="entry name" value="RRM1_NCL"/>
    <property type="match status" value="1"/>
</dbReference>
<dbReference type="CDD" id="cd12404">
    <property type="entry name" value="RRM2_NCL"/>
    <property type="match status" value="1"/>
</dbReference>
<dbReference type="CDD" id="cd12405">
    <property type="entry name" value="RRM3_NCL"/>
    <property type="match status" value="1"/>
</dbReference>
<dbReference type="CDD" id="cd12406">
    <property type="entry name" value="RRM4_NCL"/>
    <property type="match status" value="1"/>
</dbReference>
<dbReference type="FunFam" id="3.30.70.330:FF:000278">
    <property type="entry name" value="Nucleolin"/>
    <property type="match status" value="1"/>
</dbReference>
<dbReference type="Gene3D" id="3.30.70.330">
    <property type="match status" value="4"/>
</dbReference>
<dbReference type="InterPro" id="IPR050502">
    <property type="entry name" value="Euk_RNA-bind_prot"/>
</dbReference>
<dbReference type="InterPro" id="IPR034230">
    <property type="entry name" value="Nucleolin_RRM1"/>
</dbReference>
<dbReference type="InterPro" id="IPR034233">
    <property type="entry name" value="Nucleolin_RRM2"/>
</dbReference>
<dbReference type="InterPro" id="IPR034234">
    <property type="entry name" value="Nucleolin_RRM3"/>
</dbReference>
<dbReference type="InterPro" id="IPR034235">
    <property type="entry name" value="Nucleolin_RRM4"/>
</dbReference>
<dbReference type="InterPro" id="IPR012677">
    <property type="entry name" value="Nucleotide-bd_a/b_plait_sf"/>
</dbReference>
<dbReference type="InterPro" id="IPR035979">
    <property type="entry name" value="RBD_domain_sf"/>
</dbReference>
<dbReference type="InterPro" id="IPR000504">
    <property type="entry name" value="RRM_dom"/>
</dbReference>
<dbReference type="PANTHER" id="PTHR48025">
    <property type="entry name" value="OS02G0815200 PROTEIN"/>
    <property type="match status" value="1"/>
</dbReference>
<dbReference type="PANTHER" id="PTHR48025:SF1">
    <property type="entry name" value="RRM DOMAIN-CONTAINING PROTEIN"/>
    <property type="match status" value="1"/>
</dbReference>
<dbReference type="Pfam" id="PF00076">
    <property type="entry name" value="RRM_1"/>
    <property type="match status" value="4"/>
</dbReference>
<dbReference type="SMART" id="SM00360">
    <property type="entry name" value="RRM"/>
    <property type="match status" value="4"/>
</dbReference>
<dbReference type="SUPFAM" id="SSF54928">
    <property type="entry name" value="RNA-binding domain, RBD"/>
    <property type="match status" value="4"/>
</dbReference>
<dbReference type="PROSITE" id="PS50102">
    <property type="entry name" value="RRM"/>
    <property type="match status" value="4"/>
</dbReference>
<evidence type="ECO:0000250" key="1"/>
<evidence type="ECO:0000255" key="2">
    <source>
        <dbReference type="PROSITE-ProRule" id="PRU00176"/>
    </source>
</evidence>
<evidence type="ECO:0000256" key="3">
    <source>
        <dbReference type="SAM" id="MobiDB-lite"/>
    </source>
</evidence>
<evidence type="ECO:0000305" key="4"/>
<comment type="function">
    <text>Nucleolin is the major nucleolar protein of growing eukaryotic cells. It is found associated with intranucleolar chromatin and pre-ribosomal particles. It induces chromatin decondensation by binding to histone H1. It is thought to play a role in pre-rRNA transcription and ribosome assembly.</text>
</comment>
<comment type="subcellular location">
    <subcellularLocation>
        <location>Nucleus</location>
        <location>Nucleolus</location>
    </subcellularLocation>
</comment>
<name>NUCL_XENLA</name>
<reference key="1">
    <citation type="journal article" date="1993" name="Nucleic Acids Res.">
        <title>A complete nucleolin cDNA sequence from Xenopus laevis.</title>
        <authorList>
            <person name="Rankin M.L."/>
            <person name="Heine M.A."/>
            <person name="Xiao S."/>
            <person name="Leblanc M.D."/>
            <person name="Nelson J.W."/>
            <person name="Dimario P.J."/>
        </authorList>
    </citation>
    <scope>NUCLEOTIDE SEQUENCE [MRNA]</scope>
    <source>
        <tissue>Ovary</tissue>
    </source>
</reference>
<reference key="2">
    <citation type="journal article" date="1989" name="Genes Dev.">
        <title>Nucleolin from Xenopus laevis: cDNA cloning and expression during development.</title>
        <authorList>
            <person name="Caizergues-Ferrer M."/>
            <person name="Mariottini P."/>
            <person name="Curie C."/>
            <person name="Lapeyre B."/>
            <person name="Gas N."/>
            <person name="Amalric F."/>
            <person name="Amaldi F."/>
        </authorList>
    </citation>
    <scope>NUCLEOTIDE SEQUENCE [MRNA] OF 126-651</scope>
</reference>
<keyword id="KW-0238">DNA-binding</keyword>
<keyword id="KW-0488">Methylation</keyword>
<keyword id="KW-0539">Nucleus</keyword>
<keyword id="KW-0597">Phosphoprotein</keyword>
<keyword id="KW-1185">Reference proteome</keyword>
<keyword id="KW-0677">Repeat</keyword>
<keyword id="KW-0694">RNA-binding</keyword>